<proteinExistence type="evidence at protein level"/>
<accession>P9WQG5</accession>
<accession>L0TD77</accession>
<accession>P63425</accession>
<accession>P71966</accession>
<gene>
    <name type="ordered locus">Rv2669</name>
    <name type="ORF">MTCY441.38</name>
</gene>
<protein>
    <recommendedName>
        <fullName>Uncharacterized N-acetyltransferase Rv2669</fullName>
        <ecNumber>2.3.1.-</ecNumber>
    </recommendedName>
</protein>
<organism>
    <name type="scientific">Mycobacterium tuberculosis (strain ATCC 25618 / H37Rv)</name>
    <dbReference type="NCBI Taxonomy" id="83332"/>
    <lineage>
        <taxon>Bacteria</taxon>
        <taxon>Bacillati</taxon>
        <taxon>Actinomycetota</taxon>
        <taxon>Actinomycetes</taxon>
        <taxon>Mycobacteriales</taxon>
        <taxon>Mycobacteriaceae</taxon>
        <taxon>Mycobacterium</taxon>
        <taxon>Mycobacterium tuberculosis complex</taxon>
    </lineage>
</organism>
<keyword id="KW-0012">Acyltransferase</keyword>
<keyword id="KW-1185">Reference proteome</keyword>
<keyword id="KW-0808">Transferase</keyword>
<name>Y2669_MYCTU</name>
<feature type="chain" id="PRO_0000074628" description="Uncharacterized N-acetyltransferase Rv2669">
    <location>
        <begin position="1"/>
        <end position="156"/>
    </location>
</feature>
<feature type="domain" description="N-acetyltransferase" evidence="1">
    <location>
        <begin position="10"/>
        <end position="156"/>
    </location>
</feature>
<dbReference type="EC" id="2.3.1.-"/>
<dbReference type="EMBL" id="AL123456">
    <property type="protein sequence ID" value="CCP45467.1"/>
    <property type="molecule type" value="Genomic_DNA"/>
</dbReference>
<dbReference type="PIR" id="A70968">
    <property type="entry name" value="A70968"/>
</dbReference>
<dbReference type="RefSeq" id="NP_217185.1">
    <property type="nucleotide sequence ID" value="NC_000962.3"/>
</dbReference>
<dbReference type="RefSeq" id="WP_003413852.1">
    <property type="nucleotide sequence ID" value="NZ_NVQJ01000017.1"/>
</dbReference>
<dbReference type="SMR" id="P9WQG5"/>
<dbReference type="STRING" id="83332.Rv2669"/>
<dbReference type="PaxDb" id="83332-Rv2669"/>
<dbReference type="GeneID" id="887699"/>
<dbReference type="KEGG" id="mtu:Rv2669"/>
<dbReference type="KEGG" id="mtv:RVBD_2669"/>
<dbReference type="TubercuList" id="Rv2669"/>
<dbReference type="eggNOG" id="COG0456">
    <property type="taxonomic scope" value="Bacteria"/>
</dbReference>
<dbReference type="InParanoid" id="P9WQG5"/>
<dbReference type="OrthoDB" id="143110at2"/>
<dbReference type="PhylomeDB" id="P9WQG5"/>
<dbReference type="Proteomes" id="UP000001584">
    <property type="component" value="Chromosome"/>
</dbReference>
<dbReference type="GO" id="GO:0016747">
    <property type="term" value="F:acyltransferase activity, transferring groups other than amino-acyl groups"/>
    <property type="evidence" value="ECO:0007669"/>
    <property type="project" value="InterPro"/>
</dbReference>
<dbReference type="CDD" id="cd04301">
    <property type="entry name" value="NAT_SF"/>
    <property type="match status" value="1"/>
</dbReference>
<dbReference type="FunFam" id="3.40.630.30:FF:000152">
    <property type="entry name" value="Uncharacterized N-acetyltransferase MT2743"/>
    <property type="match status" value="1"/>
</dbReference>
<dbReference type="Gene3D" id="3.40.630.30">
    <property type="match status" value="1"/>
</dbReference>
<dbReference type="InterPro" id="IPR016181">
    <property type="entry name" value="Acyl_CoA_acyltransferase"/>
</dbReference>
<dbReference type="InterPro" id="IPR050832">
    <property type="entry name" value="Bact_Acetyltransf"/>
</dbReference>
<dbReference type="InterPro" id="IPR000182">
    <property type="entry name" value="GNAT_dom"/>
</dbReference>
<dbReference type="PANTHER" id="PTHR43877">
    <property type="entry name" value="AMINOALKYLPHOSPHONATE N-ACETYLTRANSFERASE-RELATED-RELATED"/>
    <property type="match status" value="1"/>
</dbReference>
<dbReference type="Pfam" id="PF00583">
    <property type="entry name" value="Acetyltransf_1"/>
    <property type="match status" value="1"/>
</dbReference>
<dbReference type="SUPFAM" id="SSF55729">
    <property type="entry name" value="Acyl-CoA N-acyltransferases (Nat)"/>
    <property type="match status" value="1"/>
</dbReference>
<dbReference type="PROSITE" id="PS51186">
    <property type="entry name" value="GNAT"/>
    <property type="match status" value="1"/>
</dbReference>
<sequence length="156" mass="17195">MTDADELAAVAARTFPLACPPAVAPEHIASFVDANLSSARFAEYLTDPRRAILTARHDGRIVGYAMLIRGDDRDVELSKLYLLPGYHGTGAAAALMHKVLATAADWGALRVWLGVNQKNQRAQRFYAKTGFKINGTRTFRLGAHHENDYVMVRELV</sequence>
<reference key="1">
    <citation type="journal article" date="1998" name="Nature">
        <title>Deciphering the biology of Mycobacterium tuberculosis from the complete genome sequence.</title>
        <authorList>
            <person name="Cole S.T."/>
            <person name="Brosch R."/>
            <person name="Parkhill J."/>
            <person name="Garnier T."/>
            <person name="Churcher C.M."/>
            <person name="Harris D.E."/>
            <person name="Gordon S.V."/>
            <person name="Eiglmeier K."/>
            <person name="Gas S."/>
            <person name="Barry C.E. III"/>
            <person name="Tekaia F."/>
            <person name="Badcock K."/>
            <person name="Basham D."/>
            <person name="Brown D."/>
            <person name="Chillingworth T."/>
            <person name="Connor R."/>
            <person name="Davies R.M."/>
            <person name="Devlin K."/>
            <person name="Feltwell T."/>
            <person name="Gentles S."/>
            <person name="Hamlin N."/>
            <person name="Holroyd S."/>
            <person name="Hornsby T."/>
            <person name="Jagels K."/>
            <person name="Krogh A."/>
            <person name="McLean J."/>
            <person name="Moule S."/>
            <person name="Murphy L.D."/>
            <person name="Oliver S."/>
            <person name="Osborne J."/>
            <person name="Quail M.A."/>
            <person name="Rajandream M.A."/>
            <person name="Rogers J."/>
            <person name="Rutter S."/>
            <person name="Seeger K."/>
            <person name="Skelton S."/>
            <person name="Squares S."/>
            <person name="Squares R."/>
            <person name="Sulston J.E."/>
            <person name="Taylor K."/>
            <person name="Whitehead S."/>
            <person name="Barrell B.G."/>
        </authorList>
    </citation>
    <scope>NUCLEOTIDE SEQUENCE [LARGE SCALE GENOMIC DNA]</scope>
    <source>
        <strain>ATCC 25618 / H37Rv</strain>
    </source>
</reference>
<reference key="2">
    <citation type="journal article" date="2011" name="Mol. Cell. Proteomics">
        <title>Proteogenomic analysis of Mycobacterium tuberculosis by high resolution mass spectrometry.</title>
        <authorList>
            <person name="Kelkar D.S."/>
            <person name="Kumar D."/>
            <person name="Kumar P."/>
            <person name="Balakrishnan L."/>
            <person name="Muthusamy B."/>
            <person name="Yadav A.K."/>
            <person name="Shrivastava P."/>
            <person name="Marimuthu A."/>
            <person name="Anand S."/>
            <person name="Sundaram H."/>
            <person name="Kingsbury R."/>
            <person name="Harsha H.C."/>
            <person name="Nair B."/>
            <person name="Prasad T.S."/>
            <person name="Chauhan D.S."/>
            <person name="Katoch K."/>
            <person name="Katoch V.M."/>
            <person name="Kumar P."/>
            <person name="Chaerkady R."/>
            <person name="Ramachandran S."/>
            <person name="Dash D."/>
            <person name="Pandey A."/>
        </authorList>
    </citation>
    <scope>IDENTIFICATION BY MASS SPECTROMETRY [LARGE SCALE ANALYSIS]</scope>
    <source>
        <strain>ATCC 25618 / H37Rv</strain>
    </source>
</reference>
<evidence type="ECO:0000255" key="1">
    <source>
        <dbReference type="PROSITE-ProRule" id="PRU00532"/>
    </source>
</evidence>
<evidence type="ECO:0000305" key="2"/>
<comment type="similarity">
    <text evidence="2">Belongs to the acetyltransferase family.</text>
</comment>